<protein>
    <recommendedName>
        <fullName evidence="1">Acid stress chaperone HdeB</fullName>
    </recommendedName>
    <alternativeName>
        <fullName>10K-L protein</fullName>
    </alternativeName>
</protein>
<comment type="function">
    <text evidence="1 6">Required for optimal acid stress protection, which is important for survival of enteric bacteria in the acidic environment of the host stomach. Exhibits a chaperone-like activity at acidic pH by preventing the aggregation of many different periplasmic proteins.</text>
</comment>
<comment type="subunit">
    <text evidence="6 8">Homodimer at neutral pH. Dissociates into monomers at acidic pH.</text>
</comment>
<comment type="subcellular location">
    <subcellularLocation>
        <location evidence="1 6">Periplasm</location>
    </subcellularLocation>
</comment>
<comment type="induction">
    <text evidence="3 4 5">Induced by the EvgS/EvgA two-component regulatory system. Negatively regulated by H-NS and the TorS/TorR two-component regulatory system.</text>
</comment>
<comment type="mass spectrometry"/>
<comment type="disruption phenotype">
    <text evidence="6">Mutants display increased sensitivity to acid stress at pH 2 and pH 3.</text>
</comment>
<comment type="miscellaneous">
    <text evidence="14">In vitro, HdeA is more efficient than HdeB at pH 2 and HdeB is more efficient than HdeA at pH 3. In vivo, both are required for optimal protection against acid stress at either pH 3 or pH 2 (PubMed:17085547).</text>
</comment>
<comment type="similarity">
    <text evidence="1">Belongs to the HdeB family.</text>
</comment>
<comment type="sequence caution" evidence="13">
    <conflict type="erroneous initiation">
        <sequence resource="EMBL-CDS" id="AAB18485"/>
    </conflict>
    <text>Extended N-terminus.</text>
</comment>
<comment type="sequence caution" evidence="13">
    <conflict type="erroneous initiation">
        <sequence resource="EMBL-CDS" id="BAA01884"/>
    </conflict>
    <text>Extended N-terminus.</text>
</comment>
<sequence>MNISSLRKAFIFMGAVAALSLVNAQSALAANESAKDMTCQEFIDLNPKAMTPVAWWMLHEETVYKGGDTVTLNETDLTQIPKVIEYCKKNPQKNLYTFKNQASNDLPN</sequence>
<evidence type="ECO:0000255" key="1">
    <source>
        <dbReference type="HAMAP-Rule" id="MF_00947"/>
    </source>
</evidence>
<evidence type="ECO:0000269" key="2">
    <source>
    </source>
</evidence>
<evidence type="ECO:0000269" key="3">
    <source>
    </source>
</evidence>
<evidence type="ECO:0000269" key="4">
    <source>
    </source>
</evidence>
<evidence type="ECO:0000269" key="5">
    <source>
    </source>
</evidence>
<evidence type="ECO:0000269" key="6">
    <source>
    </source>
</evidence>
<evidence type="ECO:0000269" key="7">
    <source>
    </source>
</evidence>
<evidence type="ECO:0000269" key="8">
    <source>
    </source>
</evidence>
<evidence type="ECO:0000269" key="9">
    <source>
    </source>
</evidence>
<evidence type="ECO:0000269" key="10">
    <source>
    </source>
</evidence>
<evidence type="ECO:0000269" key="11">
    <source>
    </source>
</evidence>
<evidence type="ECO:0000269" key="12">
    <source ref="7"/>
</evidence>
<evidence type="ECO:0000305" key="13"/>
<evidence type="ECO:0000305" key="14">
    <source>
    </source>
</evidence>
<evidence type="ECO:0007829" key="15">
    <source>
        <dbReference type="PDB" id="2MYJ"/>
    </source>
</evidence>
<evidence type="ECO:0007829" key="16">
    <source>
        <dbReference type="PDB" id="2XUV"/>
    </source>
</evidence>
<feature type="signal peptide" evidence="1 9 10 11 12">
    <location>
        <begin position="1"/>
        <end position="29"/>
    </location>
</feature>
<feature type="chain" id="PRO_0000021405" description="Acid stress chaperone HdeB">
    <location>
        <begin position="30"/>
        <end position="108"/>
    </location>
</feature>
<feature type="modified residue" description="N6-acetyllysine" evidence="7">
    <location>
        <position position="93"/>
    </location>
</feature>
<feature type="mutagenesis site" description="Folded, but does not form homodimers at pH 7." evidence="8">
    <original>WW</original>
    <variation>AA</variation>
    <location>
        <begin position="55"/>
        <end position="56"/>
    </location>
</feature>
<feature type="helix" evidence="16">
    <location>
        <begin position="34"/>
        <end position="36"/>
    </location>
</feature>
<feature type="helix" evidence="16">
    <location>
        <begin position="39"/>
        <end position="43"/>
    </location>
</feature>
<feature type="helix" evidence="16">
    <location>
        <begin position="50"/>
        <end position="59"/>
    </location>
</feature>
<feature type="strand" evidence="15">
    <location>
        <begin position="66"/>
        <end position="68"/>
    </location>
</feature>
<feature type="helix" evidence="16">
    <location>
        <begin position="74"/>
        <end position="87"/>
    </location>
</feature>
<feature type="helix" evidence="16">
    <location>
        <begin position="95"/>
        <end position="99"/>
    </location>
</feature>
<gene>
    <name evidence="1" type="primary">hdeB</name>
    <name type="synonym">yhhD</name>
    <name type="synonym">yhiC</name>
    <name type="ordered locus">b3509</name>
    <name type="ordered locus">JW5669</name>
</gene>
<accession>P0AET2</accession>
<accession>P26605</accession>
<accession>Q2M7H1</accession>
<name>HDEB_ECOLI</name>
<dbReference type="EMBL" id="D11109">
    <property type="protein sequence ID" value="BAA01884.1"/>
    <property type="status" value="ALT_INIT"/>
    <property type="molecule type" value="Genomic_DNA"/>
</dbReference>
<dbReference type="EMBL" id="U00039">
    <property type="protein sequence ID" value="AAB18485.1"/>
    <property type="status" value="ALT_INIT"/>
    <property type="molecule type" value="Genomic_DNA"/>
</dbReference>
<dbReference type="EMBL" id="U00096">
    <property type="protein sequence ID" value="AAC76534.2"/>
    <property type="molecule type" value="Genomic_DNA"/>
</dbReference>
<dbReference type="EMBL" id="AP009048">
    <property type="protein sequence ID" value="BAE77785.1"/>
    <property type="molecule type" value="Genomic_DNA"/>
</dbReference>
<dbReference type="PIR" id="S30269">
    <property type="entry name" value="S30269"/>
</dbReference>
<dbReference type="RefSeq" id="NP_417966.4">
    <property type="nucleotide sequence ID" value="NC_000913.3"/>
</dbReference>
<dbReference type="RefSeq" id="WP_001298717.1">
    <property type="nucleotide sequence ID" value="NZ_STEB01000046.1"/>
</dbReference>
<dbReference type="PDB" id="2MYJ">
    <property type="method" value="NMR"/>
    <property type="chains" value="A/B=30-108"/>
</dbReference>
<dbReference type="PDB" id="2XUV">
    <property type="method" value="X-ray"/>
    <property type="resolution" value="1.50 A"/>
    <property type="chains" value="A/B/C/D=30-108"/>
</dbReference>
<dbReference type="PDBsum" id="2MYJ"/>
<dbReference type="PDBsum" id="2XUV"/>
<dbReference type="SMR" id="P0AET2"/>
<dbReference type="BioGRID" id="4261137">
    <property type="interactions" value="6"/>
</dbReference>
<dbReference type="DIP" id="DIP-47949N"/>
<dbReference type="FunCoup" id="P0AET2">
    <property type="interactions" value="118"/>
</dbReference>
<dbReference type="IntAct" id="P0AET2">
    <property type="interactions" value="3"/>
</dbReference>
<dbReference type="STRING" id="511145.b3509"/>
<dbReference type="iPTMnet" id="P0AET2"/>
<dbReference type="jPOST" id="P0AET2"/>
<dbReference type="PaxDb" id="511145-b3509"/>
<dbReference type="EnsemblBacteria" id="AAC76534">
    <property type="protein sequence ID" value="AAC76534"/>
    <property type="gene ID" value="b3509"/>
</dbReference>
<dbReference type="GeneID" id="93778476"/>
<dbReference type="GeneID" id="948026"/>
<dbReference type="KEGG" id="ecj:JW5669"/>
<dbReference type="KEGG" id="eco:b3509"/>
<dbReference type="KEGG" id="ecoc:C3026_19010"/>
<dbReference type="PATRIC" id="fig|511145.12.peg.3616"/>
<dbReference type="EchoBASE" id="EB1371"/>
<dbReference type="eggNOG" id="ENOG50334GK">
    <property type="taxonomic scope" value="Bacteria"/>
</dbReference>
<dbReference type="HOGENOM" id="CLU_149189_1_0_6"/>
<dbReference type="InParanoid" id="P0AET2"/>
<dbReference type="OMA" id="VAFWMLN"/>
<dbReference type="OrthoDB" id="6478401at2"/>
<dbReference type="PhylomeDB" id="P0AET2"/>
<dbReference type="BioCyc" id="EcoCyc:EG11399-MONOMER"/>
<dbReference type="EvolutionaryTrace" id="P0AET2"/>
<dbReference type="PRO" id="PR:P0AET2"/>
<dbReference type="Proteomes" id="UP000000625">
    <property type="component" value="Chromosome"/>
</dbReference>
<dbReference type="GO" id="GO:0030288">
    <property type="term" value="C:outer membrane-bounded periplasmic space"/>
    <property type="evidence" value="ECO:0000314"/>
    <property type="project" value="EcoCyc"/>
</dbReference>
<dbReference type="GO" id="GO:0051082">
    <property type="term" value="F:unfolded protein binding"/>
    <property type="evidence" value="ECO:0000314"/>
    <property type="project" value="EcoCyc"/>
</dbReference>
<dbReference type="GO" id="GO:1990451">
    <property type="term" value="P:cellular stress response to acidic pH"/>
    <property type="evidence" value="ECO:0007669"/>
    <property type="project" value="UniProtKB-UniRule"/>
</dbReference>
<dbReference type="GO" id="GO:0010447">
    <property type="term" value="P:response to acidic pH"/>
    <property type="evidence" value="ECO:0000314"/>
    <property type="project" value="EcoCyc"/>
</dbReference>
<dbReference type="FunFam" id="1.10.890.10:FF:000002">
    <property type="entry name" value="Acid stress chaperone HdeB"/>
    <property type="match status" value="1"/>
</dbReference>
<dbReference type="Gene3D" id="1.10.890.10">
    <property type="entry name" value="HNS-dependent expression A"/>
    <property type="match status" value="1"/>
</dbReference>
<dbReference type="HAMAP" id="MF_00947">
    <property type="entry name" value="HdeB"/>
    <property type="match status" value="1"/>
</dbReference>
<dbReference type="InterPro" id="IPR038303">
    <property type="entry name" value="HdeA/HdeB_sf"/>
</dbReference>
<dbReference type="InterPro" id="IPR028623">
    <property type="entry name" value="HdeB"/>
</dbReference>
<dbReference type="InterPro" id="IPR010486">
    <property type="entry name" value="HNS-dep_expression_A/B"/>
</dbReference>
<dbReference type="NCBIfam" id="NF008599">
    <property type="entry name" value="PRK11566.1"/>
    <property type="match status" value="1"/>
</dbReference>
<dbReference type="Pfam" id="PF06411">
    <property type="entry name" value="HdeA"/>
    <property type="match status" value="1"/>
</dbReference>
<reference key="1">
    <citation type="journal article" date="1993" name="Mol. Gen. Genet.">
        <title>Function of the Escherichia coli nucleoid protein, H-NS: molecular analysis of a subset of proteins whose expression is enhanced in a hns deletion mutant.</title>
        <authorList>
            <person name="Yoshida T."/>
            <person name="Ueguchi C."/>
            <person name="Yamada H."/>
            <person name="Mizuno T."/>
        </authorList>
    </citation>
    <scope>NUCLEOTIDE SEQUENCE [GENOMIC DNA]</scope>
    <scope>PROTEIN SEQUENCE OF 30-49</scope>
    <source>
        <strain>K12</strain>
    </source>
</reference>
<reference key="2">
    <citation type="journal article" date="1994" name="Nucleic Acids Res.">
        <title>Analysis of the Escherichia coli genome. V. DNA sequence of the region from 76.0 to 81.5 minutes.</title>
        <authorList>
            <person name="Sofia H.J."/>
            <person name="Burland V."/>
            <person name="Daniels D.L."/>
            <person name="Plunkett G. III"/>
            <person name="Blattner F.R."/>
        </authorList>
    </citation>
    <scope>NUCLEOTIDE SEQUENCE [LARGE SCALE GENOMIC DNA]</scope>
    <source>
        <strain>K12 / MG1655 / ATCC 47076</strain>
    </source>
</reference>
<reference key="3">
    <citation type="journal article" date="1997" name="Science">
        <title>The complete genome sequence of Escherichia coli K-12.</title>
        <authorList>
            <person name="Blattner F.R."/>
            <person name="Plunkett G. III"/>
            <person name="Bloch C.A."/>
            <person name="Perna N.T."/>
            <person name="Burland V."/>
            <person name="Riley M."/>
            <person name="Collado-Vides J."/>
            <person name="Glasner J.D."/>
            <person name="Rode C.K."/>
            <person name="Mayhew G.F."/>
            <person name="Gregor J."/>
            <person name="Davis N.W."/>
            <person name="Kirkpatrick H.A."/>
            <person name="Goeden M.A."/>
            <person name="Rose D.J."/>
            <person name="Mau B."/>
            <person name="Shao Y."/>
        </authorList>
    </citation>
    <scope>NUCLEOTIDE SEQUENCE [LARGE SCALE GENOMIC DNA]</scope>
    <source>
        <strain>K12 / MG1655 / ATCC 47076</strain>
    </source>
</reference>
<reference key="4">
    <citation type="journal article" date="2006" name="Mol. Syst. Biol.">
        <title>Highly accurate genome sequences of Escherichia coli K-12 strains MG1655 and W3110.</title>
        <authorList>
            <person name="Hayashi K."/>
            <person name="Morooka N."/>
            <person name="Yamamoto Y."/>
            <person name="Fujita K."/>
            <person name="Isono K."/>
            <person name="Choi S."/>
            <person name="Ohtsubo E."/>
            <person name="Baba T."/>
            <person name="Wanner B.L."/>
            <person name="Mori H."/>
            <person name="Horiuchi T."/>
        </authorList>
    </citation>
    <scope>NUCLEOTIDE SEQUENCE [LARGE SCALE GENOMIC DNA]</scope>
    <source>
        <strain>K12 / W3110 / ATCC 27325 / DSM 5911</strain>
    </source>
</reference>
<reference key="5">
    <citation type="journal article" date="1993" name="J. Bacteriol.">
        <title>Physical map location of a set of Escherichia coli genes (hde) whose expression is affected by the nucleoid protein H-NS.</title>
        <authorList>
            <person name="Yoshida T."/>
            <person name="Ueguchi C."/>
            <person name="Mizuno T."/>
        </authorList>
    </citation>
    <scope>GENE NAME</scope>
</reference>
<reference key="6">
    <citation type="journal article" date="1997" name="Electrophoresis">
        <title>Comparing the predicted and observed properties of proteins encoded in the genome of Escherichia coli K-12.</title>
        <authorList>
            <person name="Link A.J."/>
            <person name="Robison K."/>
            <person name="Church G.M."/>
        </authorList>
    </citation>
    <scope>PROTEIN SEQUENCE OF 30-41</scope>
    <source>
        <strain>K12 / EMG2</strain>
    </source>
</reference>
<reference key="7">
    <citation type="submission" date="1994-09" db="UniProtKB">
        <authorList>
            <person name="Pasquali C."/>
            <person name="Sanchez J.-C."/>
            <person name="Ravier F."/>
            <person name="Golaz O."/>
            <person name="Hughes G.J."/>
            <person name="Frutiger S."/>
            <person name="Paquet N."/>
            <person name="Wilkins M."/>
            <person name="Appel R.D."/>
            <person name="Bairoch A."/>
            <person name="Hochstrasser D.F."/>
        </authorList>
    </citation>
    <scope>PROTEIN SEQUENCE OF 30-40</scope>
    <source>
        <strain>K12 / W3110 / ATCC 27325 / DSM 5911</strain>
    </source>
</reference>
<reference key="8">
    <citation type="journal article" date="1998" name="FEMS Microbiol. Lett.">
        <title>Small genes/gene-products in Escherichia coli K-12.</title>
        <authorList>
            <person name="Wasinger V.C."/>
            <person name="Humphery-Smith I."/>
        </authorList>
    </citation>
    <scope>PROTEIN SEQUENCE OF 30-39</scope>
    <source>
        <strain>K12</strain>
    </source>
</reference>
<reference key="9">
    <citation type="journal article" date="2002" name="J. Am. Chem. Soc.">
        <title>Gas-phase concentration, purification, and identification of whole proteins from complex mixtures.</title>
        <authorList>
            <person name="Reid G.E."/>
            <person name="Shang H."/>
            <person name="Hogan J.M."/>
            <person name="Lee G.U."/>
            <person name="McLuckey S.A."/>
        </authorList>
    </citation>
    <scope>MASS SPECTROMETRY</scope>
    <source>
        <strain>ATCC 15597</strain>
    </source>
</reference>
<reference key="10">
    <citation type="journal article" date="2002" name="J. Bacteriol.">
        <title>Escherichia coli gene expression responsive to levels of the response regulator EvgA.</title>
        <authorList>
            <person name="Masuda N."/>
            <person name="Church G.M."/>
        </authorList>
    </citation>
    <scope>INDUCTION</scope>
</reference>
<reference key="11">
    <citation type="journal article" date="2003" name="Mol. Microbiol.">
        <title>Anticipating an alkaline stress through the Tor phosphorelay system in Escherichia coli.</title>
        <authorList>
            <person name="Bordi C."/>
            <person name="Theraulaz L."/>
            <person name="Mejean V."/>
            <person name="Jourlin-Castelli C."/>
        </authorList>
    </citation>
    <scope>INDUCTION</scope>
</reference>
<reference key="12">
    <citation type="journal article" date="2005" name="Genes Dev.">
        <title>DNA looping-mediated repression by histone-like protein H-NS: specific requirement of Esigma70 as a cofactor for looping.</title>
        <authorList>
            <person name="Shin M."/>
            <person name="Song M."/>
            <person name="Rhee J.H."/>
            <person name="Hong Y."/>
            <person name="Kim Y.J."/>
            <person name="Seok Y.J."/>
            <person name="Ha K.S."/>
            <person name="Jung S.H."/>
            <person name="Choy H.E."/>
        </authorList>
    </citation>
    <scope>INDUCTION</scope>
</reference>
<reference key="13">
    <citation type="journal article" date="2007" name="J. Bacteriol.">
        <title>Escherichia coli HdeB is an acid stress chaperone.</title>
        <authorList>
            <person name="Kern R."/>
            <person name="Malki A."/>
            <person name="Abdallah J."/>
            <person name="Tagourti J."/>
            <person name="Richarme G."/>
        </authorList>
    </citation>
    <scope>FUNCTION</scope>
    <scope>SUBUNIT</scope>
    <scope>SUBCELLULAR LOCATION</scope>
    <scope>DISRUPTION PHENOTYPE</scope>
    <source>
        <strain>K12 / MG1655 / ATCC 47076</strain>
    </source>
</reference>
<reference key="14">
    <citation type="journal article" date="2009" name="Mol. Cell. Proteomics">
        <title>Lysine acetylation is a highly abundant and evolutionarily conserved modification in Escherichia coli.</title>
        <authorList>
            <person name="Zhang J."/>
            <person name="Sprung R."/>
            <person name="Pei J."/>
            <person name="Tan X."/>
            <person name="Kim S."/>
            <person name="Zhu H."/>
            <person name="Liu C.F."/>
            <person name="Grishin N.V."/>
            <person name="Zhao Y."/>
        </authorList>
    </citation>
    <scope>ACETYLATION [LARGE SCALE ANALYSIS] AT LYS-93</scope>
    <scope>IDENTIFICATION BY MASS SPECTROMETRY</scope>
    <source>
        <strain>K12 / JW1106</strain>
        <strain>K12 / MG1655 / ATCC 47076</strain>
    </source>
</reference>
<reference key="15">
    <citation type="journal article" date="2012" name="J. Mol. Biol.">
        <title>Salt bridges regulate both dimer formation and monomeric flexibility in HdeB and may have a role in periplasmic chaperone function.</title>
        <authorList>
            <person name="Wang W."/>
            <person name="Rasmussen T."/>
            <person name="Harding A.J."/>
            <person name="Booth N.A."/>
            <person name="Booth I.R."/>
            <person name="Naismith J.H."/>
        </authorList>
    </citation>
    <scope>X-RAY CRYSTALLOGRAPHY (1.5 ANGSTROMS) OF 30-108</scope>
    <scope>SUBUNIT</scope>
    <scope>MUTAGENESIS OF 55-TRP-TRP-56</scope>
</reference>
<organism>
    <name type="scientific">Escherichia coli (strain K12)</name>
    <dbReference type="NCBI Taxonomy" id="83333"/>
    <lineage>
        <taxon>Bacteria</taxon>
        <taxon>Pseudomonadati</taxon>
        <taxon>Pseudomonadota</taxon>
        <taxon>Gammaproteobacteria</taxon>
        <taxon>Enterobacterales</taxon>
        <taxon>Enterobacteriaceae</taxon>
        <taxon>Escherichia</taxon>
    </lineage>
</organism>
<keyword id="KW-0002">3D-structure</keyword>
<keyword id="KW-0007">Acetylation</keyword>
<keyword id="KW-0143">Chaperone</keyword>
<keyword id="KW-0903">Direct protein sequencing</keyword>
<keyword id="KW-0574">Periplasm</keyword>
<keyword id="KW-1185">Reference proteome</keyword>
<keyword id="KW-0732">Signal</keyword>
<proteinExistence type="evidence at protein level"/>